<organism>
    <name type="scientific">Rhizobium rhizogenes</name>
    <name type="common">Agrobacterium rhizogenes</name>
    <dbReference type="NCBI Taxonomy" id="359"/>
    <lineage>
        <taxon>Bacteria</taxon>
        <taxon>Pseudomonadati</taxon>
        <taxon>Pseudomonadota</taxon>
        <taxon>Alphaproteobacteria</taxon>
        <taxon>Hyphomicrobiales</taxon>
        <taxon>Rhizobiaceae</taxon>
        <taxon>Rhizobium/Agrobacterium group</taxon>
        <taxon>Rhizobium</taxon>
    </lineage>
</organism>
<feature type="chain" id="PRO_0000160982" description="Histidine ammonia-lyase">
    <location>
        <begin position="1"/>
        <end position="511"/>
    </location>
</feature>
<feature type="modified residue" description="2,3-didehydroalanine (Ser)" evidence="1">
    <location>
        <position position="143"/>
    </location>
</feature>
<feature type="cross-link" description="5-imidazolinone (Ala-Gly)" evidence="1">
    <location>
        <begin position="142"/>
        <end position="144"/>
    </location>
</feature>
<protein>
    <recommendedName>
        <fullName evidence="1">Histidine ammonia-lyase</fullName>
        <shortName evidence="1">Histidase</shortName>
        <ecNumber evidence="1">4.3.1.3</ecNumber>
    </recommendedName>
</protein>
<dbReference type="EC" id="4.3.1.3" evidence="1"/>
<dbReference type="EMBL" id="AB039932">
    <property type="protein sequence ID" value="BAA97751.1"/>
    <property type="molecule type" value="Genomic_DNA"/>
</dbReference>
<dbReference type="EMBL" id="AP002086">
    <property type="protein sequence ID" value="BAB16159.1"/>
    <property type="molecule type" value="Genomic_DNA"/>
</dbReference>
<dbReference type="RefSeq" id="NP_066621.1">
    <property type="nucleotide sequence ID" value="NC_002575.1"/>
</dbReference>
<dbReference type="RefSeq" id="WP_010900230.1">
    <property type="nucleotide sequence ID" value="NC_002575.1"/>
</dbReference>
<dbReference type="SMR" id="Q9KWE4"/>
<dbReference type="STRING" id="359.B0909_18395"/>
<dbReference type="UniPathway" id="UPA00379">
    <property type="reaction ID" value="UER00549"/>
</dbReference>
<dbReference type="GO" id="GO:0005737">
    <property type="term" value="C:cytoplasm"/>
    <property type="evidence" value="ECO:0007669"/>
    <property type="project" value="UniProtKB-SubCell"/>
</dbReference>
<dbReference type="GO" id="GO:0004397">
    <property type="term" value="F:histidine ammonia-lyase activity"/>
    <property type="evidence" value="ECO:0007669"/>
    <property type="project" value="UniProtKB-UniRule"/>
</dbReference>
<dbReference type="GO" id="GO:0019556">
    <property type="term" value="P:L-histidine catabolic process to glutamate and formamide"/>
    <property type="evidence" value="ECO:0007669"/>
    <property type="project" value="UniProtKB-UniPathway"/>
</dbReference>
<dbReference type="GO" id="GO:0019557">
    <property type="term" value="P:L-histidine catabolic process to glutamate and formate"/>
    <property type="evidence" value="ECO:0007669"/>
    <property type="project" value="UniProtKB-UniPathway"/>
</dbReference>
<dbReference type="CDD" id="cd00332">
    <property type="entry name" value="PAL-HAL"/>
    <property type="match status" value="1"/>
</dbReference>
<dbReference type="FunFam" id="1.10.275.10:FF:000005">
    <property type="entry name" value="Histidine ammonia-lyase"/>
    <property type="match status" value="1"/>
</dbReference>
<dbReference type="FunFam" id="1.20.200.10:FF:000003">
    <property type="entry name" value="Histidine ammonia-lyase"/>
    <property type="match status" value="1"/>
</dbReference>
<dbReference type="Gene3D" id="1.20.200.10">
    <property type="entry name" value="Fumarase/aspartase (Central domain)"/>
    <property type="match status" value="1"/>
</dbReference>
<dbReference type="Gene3D" id="1.10.275.10">
    <property type="entry name" value="Fumarase/aspartase (N-terminal domain)"/>
    <property type="match status" value="1"/>
</dbReference>
<dbReference type="HAMAP" id="MF_00229">
    <property type="entry name" value="His_ammonia_lyase"/>
    <property type="match status" value="1"/>
</dbReference>
<dbReference type="InterPro" id="IPR001106">
    <property type="entry name" value="Aromatic_Lyase"/>
</dbReference>
<dbReference type="InterPro" id="IPR024083">
    <property type="entry name" value="Fumarase/histidase_N"/>
</dbReference>
<dbReference type="InterPro" id="IPR005921">
    <property type="entry name" value="HutH"/>
</dbReference>
<dbReference type="InterPro" id="IPR008948">
    <property type="entry name" value="L-Aspartase-like"/>
</dbReference>
<dbReference type="InterPro" id="IPR022313">
    <property type="entry name" value="Phe/His_NH3-lyase_AS"/>
</dbReference>
<dbReference type="NCBIfam" id="TIGR01225">
    <property type="entry name" value="hutH"/>
    <property type="match status" value="1"/>
</dbReference>
<dbReference type="NCBIfam" id="NF006871">
    <property type="entry name" value="PRK09367.1"/>
    <property type="match status" value="1"/>
</dbReference>
<dbReference type="PANTHER" id="PTHR10362">
    <property type="entry name" value="HISTIDINE AMMONIA-LYASE"/>
    <property type="match status" value="1"/>
</dbReference>
<dbReference type="Pfam" id="PF00221">
    <property type="entry name" value="Lyase_aromatic"/>
    <property type="match status" value="1"/>
</dbReference>
<dbReference type="SUPFAM" id="SSF48557">
    <property type="entry name" value="L-aspartase-like"/>
    <property type="match status" value="1"/>
</dbReference>
<dbReference type="PROSITE" id="PS00488">
    <property type="entry name" value="PAL_HISTIDASE"/>
    <property type="match status" value="1"/>
</dbReference>
<geneLocation type="plasmid">
    <name>pRi1724</name>
</geneLocation>
<keyword id="KW-0963">Cytoplasm</keyword>
<keyword id="KW-0369">Histidine metabolism</keyword>
<keyword id="KW-0456">Lyase</keyword>
<keyword id="KW-0614">Plasmid</keyword>
<gene>
    <name evidence="1" type="primary">hutH</name>
    <name type="ORF">riorf40</name>
</gene>
<name>HUTH_RHIRH</name>
<sequence>MTIVLRPGSVPLHHLADIYWNNGSAKLDPSFDAAVLKGAARIAEIAAGNAPVYGINTGFGKLASIKIDAADLATLQRNLILSHCCGVGAPLPENVVRLIMALKLISLGRGASGVRIELIRLIEGMLEKGVIPVIPEKGSVGASGDLAPLAHMSATMMGEGEAFYQGVQMPSKDALAKAGLSPVVLAAKEGLALINGTQTSTALALAGLFRAHRAAQSALVTGALSTDAAMGSSAPFHPDIHTLRGHKGQIDAGSALRNLLQGSEIRESHIEGDERVQDPYCIRCQPQVDGACLDLLASVARTLEIEANAVTDNPLVLSDNSVVSGGNFHAEPVAFAADQTALAVCEIGAIAQRRIALLVDPALSYGLPAFLSKKPGLNSGLMIAEVTSAALMSENKQMSHPASVDSTPTSANQEDHVSMACHGARRLLAMTDNLFGILGIEALAAVQGVELRGPLKTSPELEKAAAVLRSAVPVLEDDRYMATDLKAAIEVVASGALVSAISSGILPVLEA</sequence>
<proteinExistence type="inferred from homology"/>
<comment type="catalytic activity">
    <reaction evidence="1">
        <text>L-histidine = trans-urocanate + NH4(+)</text>
        <dbReference type="Rhea" id="RHEA:21232"/>
        <dbReference type="ChEBI" id="CHEBI:17771"/>
        <dbReference type="ChEBI" id="CHEBI:28938"/>
        <dbReference type="ChEBI" id="CHEBI:57595"/>
        <dbReference type="EC" id="4.3.1.3"/>
    </reaction>
</comment>
<comment type="pathway">
    <text evidence="1">Amino-acid degradation; L-histidine degradation into L-glutamate; N-formimidoyl-L-glutamate from L-histidine: step 1/3.</text>
</comment>
<comment type="subcellular location">
    <subcellularLocation>
        <location evidence="1">Cytoplasm</location>
    </subcellularLocation>
</comment>
<comment type="PTM">
    <text evidence="1">Contains an active site 4-methylidene-imidazol-5-one (MIO), which is formed autocatalytically by cyclization and dehydration of residues Ala-Ser-Gly.</text>
</comment>
<comment type="similarity">
    <text evidence="1">Belongs to the PAL/histidase family.</text>
</comment>
<evidence type="ECO:0000255" key="1">
    <source>
        <dbReference type="HAMAP-Rule" id="MF_00229"/>
    </source>
</evidence>
<accession>Q9KWE4</accession>
<reference key="1">
    <citation type="journal article" date="2000" name="DNA Res.">
        <title>Analysis of unique variable region of a plant root inducing plasmid, pRi1724, by the construction of its physical map and library.</title>
        <authorList>
            <person name="Moriguchi K."/>
            <person name="Maeda Y."/>
            <person name="Satou M."/>
            <person name="Kataoka M."/>
            <person name="Tanaka N."/>
            <person name="Yoshida K."/>
        </authorList>
    </citation>
    <scope>NUCLEOTIDE SEQUENCE [GENOMIC DNA]</scope>
    <source>
        <strain>MAFF03-01724</strain>
    </source>
</reference>
<reference key="2">
    <citation type="journal article" date="2001" name="J. Mol. Biol.">
        <title>The complete nucleotide sequence of a plant root-inducing (Ri) plasmid indicates its chimeric structure and evolutionary relationship between tumor-inducing (Ti) and symbiotic (Sym) plasmids in Rhizobiaceae.</title>
        <authorList>
            <person name="Moriguchi K."/>
            <person name="Maeda Y."/>
            <person name="Satou M."/>
            <person name="Hardayani N.S.N."/>
            <person name="Kataoka M."/>
            <person name="Tanaka N."/>
            <person name="Yoshida K."/>
        </authorList>
    </citation>
    <scope>NUCLEOTIDE SEQUENCE [GENOMIC DNA]</scope>
    <source>
        <strain>MAFF03-01724</strain>
    </source>
</reference>